<sequence length="105" mass="11851">MNTLFGKTKEEAKPIVLKSVDEYPEAPISLGTTLVNPTGDWRTFKPVVNEEKCVKCYICWKYCPEPAIYIKPDGYVAIDYDYCKGCGICANECPTKAITMIKEEK</sequence>
<comment type="catalytic activity">
    <reaction>
        <text>3-methyl-2-oxobutanoate + 2 oxidized [2Fe-2S]-[ferredoxin] + CoA = 2-methylpropanoyl-CoA + 2 reduced [2Fe-2S]-[ferredoxin] + CO2 + H(+)</text>
        <dbReference type="Rhea" id="RHEA:11712"/>
        <dbReference type="Rhea" id="RHEA-COMP:10000"/>
        <dbReference type="Rhea" id="RHEA-COMP:10001"/>
        <dbReference type="ChEBI" id="CHEBI:11851"/>
        <dbReference type="ChEBI" id="CHEBI:15378"/>
        <dbReference type="ChEBI" id="CHEBI:16526"/>
        <dbReference type="ChEBI" id="CHEBI:33737"/>
        <dbReference type="ChEBI" id="CHEBI:33738"/>
        <dbReference type="ChEBI" id="CHEBI:57287"/>
        <dbReference type="ChEBI" id="CHEBI:57338"/>
        <dbReference type="EC" id="1.2.7.7"/>
    </reaction>
</comment>
<comment type="cofactor">
    <cofactor evidence="1">
        <name>[4Fe-4S] cluster</name>
        <dbReference type="ChEBI" id="CHEBI:49883"/>
    </cofactor>
    <text evidence="1">Binds 2 [4Fe-4S] clusters.</text>
</comment>
<comment type="subunit">
    <text>Heterotetramer of one alpha, one beta, one delta and one gamma chain.</text>
</comment>
<reference key="1">
    <citation type="journal article" date="1996" name="J. Bacteriol.">
        <title>Molecular and phylogenetic characterization of pyruvate and 2-ketoisovalerate ferredoxin oxidoreductases from Pyrococcus furiosus and pyruvate ferredoxin oxidoreductase from Thermotoga maritima.</title>
        <authorList>
            <person name="Kletzin A."/>
            <person name="Adams M.W.W."/>
        </authorList>
    </citation>
    <scope>NUCLEOTIDE SEQUENCE [GENOMIC DNA]</scope>
    <scope>PROTEIN SEQUENCE OF 1-15</scope>
    <source>
        <strain>ATCC 43587 / DSM 3638 / JCM 8422 / Vc1</strain>
    </source>
</reference>
<reference key="2">
    <citation type="journal article" date="1999" name="Genetics">
        <title>Divergence of the hyperthermophilic archaea Pyrococcus furiosus and P. horikoshii inferred from complete genomic sequences.</title>
        <authorList>
            <person name="Maeder D.L."/>
            <person name="Weiss R.B."/>
            <person name="Dunn D.M."/>
            <person name="Cherry J.L."/>
            <person name="Gonzalez J.M."/>
            <person name="DiRuggiero J."/>
            <person name="Robb F.T."/>
        </authorList>
    </citation>
    <scope>NUCLEOTIDE SEQUENCE [LARGE SCALE GENOMIC DNA]</scope>
    <source>
        <strain>ATCC 43587 / DSM 3638 / JCM 8422 / Vc1</strain>
    </source>
</reference>
<dbReference type="EC" id="1.2.7.7"/>
<dbReference type="EMBL" id="X85250">
    <property type="protein sequence ID" value="CAA59501.1"/>
    <property type="molecule type" value="Genomic_DNA"/>
</dbReference>
<dbReference type="EMBL" id="AE009950">
    <property type="protein sequence ID" value="AAL81094.1"/>
    <property type="molecule type" value="Genomic_DNA"/>
</dbReference>
<dbReference type="PIR" id="T45084">
    <property type="entry name" value="T45084"/>
</dbReference>
<dbReference type="RefSeq" id="WP_011012107.1">
    <property type="nucleotide sequence ID" value="NZ_CP023154.1"/>
</dbReference>
<dbReference type="SMR" id="Q51800"/>
<dbReference type="STRING" id="186497.PF0970"/>
<dbReference type="PaxDb" id="186497-PF0970"/>
<dbReference type="KEGG" id="pfu:PF0970"/>
<dbReference type="PATRIC" id="fig|186497.12.peg.1029"/>
<dbReference type="eggNOG" id="arCOG01605">
    <property type="taxonomic scope" value="Archaea"/>
</dbReference>
<dbReference type="HOGENOM" id="CLU_139698_1_1_2"/>
<dbReference type="OrthoDB" id="23478at2157"/>
<dbReference type="PhylomeDB" id="Q51800"/>
<dbReference type="Proteomes" id="UP000001013">
    <property type="component" value="Chromosome"/>
</dbReference>
<dbReference type="GO" id="GO:0043807">
    <property type="term" value="F:3-methyl-2-oxobutanoate dehydrogenase (ferredoxin) activity"/>
    <property type="evidence" value="ECO:0007669"/>
    <property type="project" value="UniProtKB-EC"/>
</dbReference>
<dbReference type="GO" id="GO:0051539">
    <property type="term" value="F:4 iron, 4 sulfur cluster binding"/>
    <property type="evidence" value="ECO:0007669"/>
    <property type="project" value="UniProtKB-KW"/>
</dbReference>
<dbReference type="GO" id="GO:0046872">
    <property type="term" value="F:metal ion binding"/>
    <property type="evidence" value="ECO:0007669"/>
    <property type="project" value="UniProtKB-KW"/>
</dbReference>
<dbReference type="Gene3D" id="3.30.70.20">
    <property type="match status" value="1"/>
</dbReference>
<dbReference type="InterPro" id="IPR017896">
    <property type="entry name" value="4Fe4S_Fe-S-bd"/>
</dbReference>
<dbReference type="InterPro" id="IPR017900">
    <property type="entry name" value="4Fe4S_Fe_S_CS"/>
</dbReference>
<dbReference type="InterPro" id="IPR011898">
    <property type="entry name" value="PorD_KorD"/>
</dbReference>
<dbReference type="NCBIfam" id="TIGR02179">
    <property type="entry name" value="PorD_KorD"/>
    <property type="match status" value="1"/>
</dbReference>
<dbReference type="NCBIfam" id="NF007202">
    <property type="entry name" value="PRK09623.1"/>
    <property type="match status" value="1"/>
</dbReference>
<dbReference type="PANTHER" id="PTHR43724">
    <property type="entry name" value="PYRUVATE SYNTHASE SUBUNIT PORD"/>
    <property type="match status" value="1"/>
</dbReference>
<dbReference type="PANTHER" id="PTHR43724:SF1">
    <property type="entry name" value="PYRUVATE SYNTHASE SUBUNIT PORD"/>
    <property type="match status" value="1"/>
</dbReference>
<dbReference type="Pfam" id="PF14697">
    <property type="entry name" value="Fer4_21"/>
    <property type="match status" value="1"/>
</dbReference>
<dbReference type="SUPFAM" id="SSF54862">
    <property type="entry name" value="4Fe-4S ferredoxins"/>
    <property type="match status" value="1"/>
</dbReference>
<dbReference type="PROSITE" id="PS00198">
    <property type="entry name" value="4FE4S_FER_1"/>
    <property type="match status" value="2"/>
</dbReference>
<dbReference type="PROSITE" id="PS51379">
    <property type="entry name" value="4FE4S_FER_2"/>
    <property type="match status" value="2"/>
</dbReference>
<keyword id="KW-0004">4Fe-4S</keyword>
<keyword id="KW-0903">Direct protein sequencing</keyword>
<keyword id="KW-0249">Electron transport</keyword>
<keyword id="KW-0408">Iron</keyword>
<keyword id="KW-0411">Iron-sulfur</keyword>
<keyword id="KW-0479">Metal-binding</keyword>
<keyword id="KW-0560">Oxidoreductase</keyword>
<keyword id="KW-1185">Reference proteome</keyword>
<keyword id="KW-0677">Repeat</keyword>
<keyword id="KW-0813">Transport</keyword>
<gene>
    <name type="primary">vorD</name>
    <name type="ordered locus">PF0970</name>
</gene>
<protein>
    <recommendedName>
        <fullName>Ketoisovalerate oxidoreductase subunit VorD</fullName>
        <shortName>VOR</shortName>
        <ecNumber>1.2.7.7</ecNumber>
    </recommendedName>
    <alternativeName>
        <fullName>2-oxoisovalerate ferredoxin reductase subunit delta</fullName>
    </alternativeName>
    <alternativeName>
        <fullName>2-oxoisovalerate oxidoreductase delta chain</fullName>
    </alternativeName>
</protein>
<evidence type="ECO:0000250" key="1"/>
<evidence type="ECO:0000255" key="2"/>
<evidence type="ECO:0000255" key="3">
    <source>
        <dbReference type="PROSITE-ProRule" id="PRU00711"/>
    </source>
</evidence>
<feature type="chain" id="PRO_0000099962" description="Ketoisovalerate oxidoreductase subunit VorD">
    <location>
        <begin position="1"/>
        <end position="105"/>
    </location>
</feature>
<feature type="domain" description="4Fe-4S ferredoxin-type 1" evidence="3">
    <location>
        <begin position="44"/>
        <end position="73"/>
    </location>
</feature>
<feature type="domain" description="4Fe-4S ferredoxin-type 2" evidence="3">
    <location>
        <begin position="74"/>
        <end position="103"/>
    </location>
</feature>
<feature type="binding site" evidence="2">
    <location>
        <position position="53"/>
    </location>
    <ligand>
        <name>[4Fe-4S] cluster</name>
        <dbReference type="ChEBI" id="CHEBI:49883"/>
        <label>1</label>
    </ligand>
</feature>
<feature type="binding site" evidence="2">
    <location>
        <position position="56"/>
    </location>
    <ligand>
        <name>[4Fe-4S] cluster</name>
        <dbReference type="ChEBI" id="CHEBI:49883"/>
        <label>1</label>
    </ligand>
</feature>
<feature type="binding site" evidence="2">
    <location>
        <position position="59"/>
    </location>
    <ligand>
        <name>[4Fe-4S] cluster</name>
        <dbReference type="ChEBI" id="CHEBI:49883"/>
        <label>1</label>
    </ligand>
</feature>
<feature type="binding site" evidence="2">
    <location>
        <position position="63"/>
    </location>
    <ligand>
        <name>[4Fe-4S] cluster</name>
        <dbReference type="ChEBI" id="CHEBI:49883"/>
        <label>2</label>
    </ligand>
</feature>
<feature type="binding site" evidence="2">
    <location>
        <position position="83"/>
    </location>
    <ligand>
        <name>[4Fe-4S] cluster</name>
        <dbReference type="ChEBI" id="CHEBI:49883"/>
        <label>2</label>
    </ligand>
</feature>
<feature type="binding site" evidence="2">
    <location>
        <position position="86"/>
    </location>
    <ligand>
        <name>[4Fe-4S] cluster</name>
        <dbReference type="ChEBI" id="CHEBI:49883"/>
        <label>2</label>
    </ligand>
</feature>
<feature type="binding site" evidence="2">
    <location>
        <position position="89"/>
    </location>
    <ligand>
        <name>[4Fe-4S] cluster</name>
        <dbReference type="ChEBI" id="CHEBI:49883"/>
        <label>2</label>
    </ligand>
</feature>
<feature type="binding site" evidence="2">
    <location>
        <position position="93"/>
    </location>
    <ligand>
        <name>[4Fe-4S] cluster</name>
        <dbReference type="ChEBI" id="CHEBI:49883"/>
        <label>1</label>
    </ligand>
</feature>
<name>VORD_PYRFU</name>
<organism>
    <name type="scientific">Pyrococcus furiosus (strain ATCC 43587 / DSM 3638 / JCM 8422 / Vc1)</name>
    <dbReference type="NCBI Taxonomy" id="186497"/>
    <lineage>
        <taxon>Archaea</taxon>
        <taxon>Methanobacteriati</taxon>
        <taxon>Methanobacteriota</taxon>
        <taxon>Thermococci</taxon>
        <taxon>Thermococcales</taxon>
        <taxon>Thermococcaceae</taxon>
        <taxon>Pyrococcus</taxon>
    </lineage>
</organism>
<proteinExistence type="evidence at protein level"/>
<accession>Q51800</accession>